<sequence>MERSGTTPRFAQNPVVNDTGLLEALSHFNREKIPERVVHAKGTGAYGEFEVTDDISDICNIDMLLGVGKKTPCVGRFSTTGLERGSAEGIRDVKGLGLKFDTKEGNWDWVCINFPYFFIRDPAKFPDLMHAQQRDPKTNLLNPNMYWDWVADNPESLHLVLTLFSKLGTMFNWRTMSAYLGHAYKWTMPDGSFKYVHVYLSPNGGPSNENASMDDAMDENINDPDGASRDLYEAIERGDFPTWTAYAQVVDPEDAPDLDFNILDMTKHWNYGFYPKNGSVIPKRAFGTLTLNRNPEKYFSEIECLTFSPSNLVPGVLPSEDPILQARMFAYPDAQRYRLGVNPENPPARPKKPLSLKPGSQKFDEWVSQVSSPAWSEAKEDDYEFARELYEWYPQFRDQEFQNELIDNLAESISQTCDAVRQKVYRTFALVSTDLADRVREGVEKRLETAATNSTPQELPGRARL</sequence>
<evidence type="ECO:0000250" key="1">
    <source>
        <dbReference type="UniProtKB" id="P15202"/>
    </source>
</evidence>
<evidence type="ECO:0000269" key="2">
    <source>
    </source>
</evidence>
<evidence type="ECO:0000269" key="3">
    <source>
    </source>
</evidence>
<evidence type="ECO:0000303" key="4">
    <source>
    </source>
</evidence>
<evidence type="ECO:0000305" key="5"/>
<evidence type="ECO:0000305" key="6">
    <source>
    </source>
</evidence>
<proteinExistence type="inferred from homology"/>
<feature type="chain" id="PRO_0000446459" description="Catalase cnsD">
    <location>
        <begin position="1"/>
        <end position="465"/>
    </location>
</feature>
<feature type="active site" evidence="1">
    <location>
        <position position="39"/>
    </location>
</feature>
<feature type="binding site" description="axial binding residue" evidence="1">
    <location>
        <position position="331"/>
    </location>
    <ligand>
        <name>heme</name>
        <dbReference type="ChEBI" id="CHEBI:30413"/>
    </ligand>
    <ligandPart>
        <name>Fe</name>
        <dbReference type="ChEBI" id="CHEBI:18248"/>
    </ligandPart>
</feature>
<organism>
    <name type="scientific">Penicillium expansum</name>
    <name type="common">Blue mold rot fungus</name>
    <dbReference type="NCBI Taxonomy" id="27334"/>
    <lineage>
        <taxon>Eukaryota</taxon>
        <taxon>Fungi</taxon>
        <taxon>Dikarya</taxon>
        <taxon>Ascomycota</taxon>
        <taxon>Pezizomycotina</taxon>
        <taxon>Eurotiomycetes</taxon>
        <taxon>Eurotiomycetidae</taxon>
        <taxon>Eurotiales</taxon>
        <taxon>Aspergillaceae</taxon>
        <taxon>Penicillium</taxon>
    </lineage>
</organism>
<comment type="function">
    <text evidence="2 3">Catalase; part of the gene cluster that mediates the biosynthesis of communesins, a prominent class of indole alkaloids with great potential as pharmaceuticals (PubMed:25571861). Communesins are biosynthesized by the coupling of tryptamine and aurantioclavine, two building blocks derived from L-tryptophan (PubMed:25571861). The L-tryptophan decarboxylase cnsB converts L-tryptophan to tryptamine, whereas the tryptophan dimethylallyltransferase cnsF converts L-tryptophan to 4-dimethylallyl tryptophan which is further transformed to aurantioclavine by the aurantioclavine synthase cnsA, probably aided by the catalase cnsD (PubMed:25571861). The cytochrome P450 monooxygenase cnsC catalyzes the heterodimeric coupling between the two different indole moieties, tryptamine and aurantioclavine, to construct vicinal quaternary stereocenters and yield the heptacyclic communesin scaffold (PubMed:26963294). The O-methyltransferase cnsE then methylates the communesin scaffold to produce communesin K, the simplest characterized communesin that contains the heptacyclic core (PubMed:25571861). The dioxygenase cnsJ converts communesin K into communesin I (PubMed:25571861). Acylation to introduce the hexadienyl group at position N16 of communesin I by the acyltransferase cnsK leads to the production of communesin B. The hexadienyl group is produced by the highly reducing polyketide synthase cnsI, before being hydrolytically removed from cnsI by the serine hydrolase cnsH, converted into hexadienyl-CoA by the CoA ligase cnsG, and then transferred to communesin I by cnsK (PubMed:25571861). Surprisingly, cnsK may also be a promiscuous acyltransferase that can tolerate a range of acyl groups, including acetyl-, propionyl-, and butyryl-CoA, which lead to communesins A, G and H respectively (PubMed:25571861). The roles of the alpha-ketoglutarate-dependent dioxygenases cnsM and cnsP have still to be determined (PubMed:25571861).</text>
</comment>
<comment type="cofactor">
    <cofactor evidence="1">
        <name>heme</name>
        <dbReference type="ChEBI" id="CHEBI:30413"/>
    </cofactor>
</comment>
<comment type="pathway">
    <text evidence="6">Alkaloid biosynthesis.</text>
</comment>
<comment type="similarity">
    <text evidence="5">Belongs to the catalase family.</text>
</comment>
<gene>
    <name evidence="4" type="primary">cnsD</name>
    <name type="ORF">PEX2_055380</name>
</gene>
<name>CNSD_PENEN</name>
<protein>
    <recommendedName>
        <fullName evidence="4">Catalase cnsD</fullName>
        <ecNumber evidence="6">1.11.-.-</ecNumber>
    </recommendedName>
    <alternativeName>
        <fullName evidence="4">Communesin biosynthesis cluster protein D</fullName>
    </alternativeName>
</protein>
<dbReference type="EC" id="1.11.-.-" evidence="6"/>
<dbReference type="EMBL" id="JQFZ01000090">
    <property type="protein sequence ID" value="KGO59697.1"/>
    <property type="molecule type" value="Genomic_DNA"/>
</dbReference>
<dbReference type="RefSeq" id="XP_016600810.1">
    <property type="nucleotide sequence ID" value="XM_016742812.1"/>
</dbReference>
<dbReference type="SMR" id="A0A0A2JW88"/>
<dbReference type="STRING" id="27334.A0A0A2JW88"/>
<dbReference type="GeneID" id="27678231"/>
<dbReference type="VEuPathDB" id="FungiDB:PEXP_030490"/>
<dbReference type="HOGENOM" id="CLU_010645_2_0_1"/>
<dbReference type="OrthoDB" id="6880011at2759"/>
<dbReference type="PhylomeDB" id="A0A0A2JW88"/>
<dbReference type="Proteomes" id="UP000030143">
    <property type="component" value="Unassembled WGS sequence"/>
</dbReference>
<dbReference type="GO" id="GO:0005739">
    <property type="term" value="C:mitochondrion"/>
    <property type="evidence" value="ECO:0007669"/>
    <property type="project" value="TreeGrafter"/>
</dbReference>
<dbReference type="GO" id="GO:0005777">
    <property type="term" value="C:peroxisome"/>
    <property type="evidence" value="ECO:0007669"/>
    <property type="project" value="TreeGrafter"/>
</dbReference>
<dbReference type="GO" id="GO:0004096">
    <property type="term" value="F:catalase activity"/>
    <property type="evidence" value="ECO:0007669"/>
    <property type="project" value="InterPro"/>
</dbReference>
<dbReference type="GO" id="GO:0020037">
    <property type="term" value="F:heme binding"/>
    <property type="evidence" value="ECO:0007669"/>
    <property type="project" value="InterPro"/>
</dbReference>
<dbReference type="GO" id="GO:0046872">
    <property type="term" value="F:metal ion binding"/>
    <property type="evidence" value="ECO:0007669"/>
    <property type="project" value="UniProtKB-KW"/>
</dbReference>
<dbReference type="GO" id="GO:0009820">
    <property type="term" value="P:alkaloid metabolic process"/>
    <property type="evidence" value="ECO:0007669"/>
    <property type="project" value="UniProtKB-KW"/>
</dbReference>
<dbReference type="GO" id="GO:0042744">
    <property type="term" value="P:hydrogen peroxide catabolic process"/>
    <property type="evidence" value="ECO:0007669"/>
    <property type="project" value="UniProtKB-KW"/>
</dbReference>
<dbReference type="GO" id="GO:0042542">
    <property type="term" value="P:response to hydrogen peroxide"/>
    <property type="evidence" value="ECO:0007669"/>
    <property type="project" value="TreeGrafter"/>
</dbReference>
<dbReference type="Gene3D" id="2.40.180.10">
    <property type="entry name" value="Catalase core domain"/>
    <property type="match status" value="1"/>
</dbReference>
<dbReference type="InterPro" id="IPR018028">
    <property type="entry name" value="Catalase"/>
</dbReference>
<dbReference type="InterPro" id="IPR024708">
    <property type="entry name" value="Catalase_AS"/>
</dbReference>
<dbReference type="InterPro" id="IPR024711">
    <property type="entry name" value="Catalase_clade1/3"/>
</dbReference>
<dbReference type="InterPro" id="IPR011614">
    <property type="entry name" value="Catalase_core"/>
</dbReference>
<dbReference type="InterPro" id="IPR002226">
    <property type="entry name" value="Catalase_haem_BS"/>
</dbReference>
<dbReference type="InterPro" id="IPR020835">
    <property type="entry name" value="Catalase_sf"/>
</dbReference>
<dbReference type="PANTHER" id="PTHR11465">
    <property type="entry name" value="CATALASE"/>
    <property type="match status" value="1"/>
</dbReference>
<dbReference type="PANTHER" id="PTHR11465:SF9">
    <property type="entry name" value="CATALASE"/>
    <property type="match status" value="1"/>
</dbReference>
<dbReference type="Pfam" id="PF00199">
    <property type="entry name" value="Catalase"/>
    <property type="match status" value="1"/>
</dbReference>
<dbReference type="PIRSF" id="PIRSF038928">
    <property type="entry name" value="Catalase_clade1-3"/>
    <property type="match status" value="1"/>
</dbReference>
<dbReference type="PRINTS" id="PR00067">
    <property type="entry name" value="CATALASE"/>
</dbReference>
<dbReference type="SMART" id="SM01060">
    <property type="entry name" value="Catalase"/>
    <property type="match status" value="1"/>
</dbReference>
<dbReference type="SUPFAM" id="SSF56634">
    <property type="entry name" value="Heme-dependent catalase-like"/>
    <property type="match status" value="1"/>
</dbReference>
<dbReference type="PROSITE" id="PS00437">
    <property type="entry name" value="CATALASE_1"/>
    <property type="match status" value="1"/>
</dbReference>
<dbReference type="PROSITE" id="PS00438">
    <property type="entry name" value="CATALASE_2"/>
    <property type="match status" value="1"/>
</dbReference>
<dbReference type="PROSITE" id="PS51402">
    <property type="entry name" value="CATALASE_3"/>
    <property type="match status" value="1"/>
</dbReference>
<reference key="1">
    <citation type="journal article" date="2015" name="Mol. Plant Microbe Interact.">
        <title>Genome, transcriptome, and functional analyses of Penicillium expansum provide new insights into secondary metabolism and pathogenicity.</title>
        <authorList>
            <person name="Ballester A.R."/>
            <person name="Marcet-Houben M."/>
            <person name="Levin E."/>
            <person name="Sela N."/>
            <person name="Selma-Lazaro C."/>
            <person name="Carmona L."/>
            <person name="Wisniewski M."/>
            <person name="Droby S."/>
            <person name="Gonzalez-Candelas L."/>
            <person name="Gabaldon T."/>
        </authorList>
    </citation>
    <scope>NUCLEOTIDE SEQUENCE [LARGE SCALE GENOMIC DNA]</scope>
    <source>
        <strain>MD-8</strain>
    </source>
</reference>
<reference key="2">
    <citation type="journal article" date="2015" name="Angew. Chem. Int. Ed.">
        <title>Elucidation of the concise biosynthetic pathway of the communesin indole alkaloids.</title>
        <authorList>
            <person name="Lin H.C."/>
            <person name="Chiou G."/>
            <person name="Chooi Y.H."/>
            <person name="McMahon T.C."/>
            <person name="Xu W."/>
            <person name="Garg N.K."/>
            <person name="Tang Y."/>
        </authorList>
    </citation>
    <scope>IDENTIFICATION</scope>
    <scope>FUNCTION</scope>
    <scope>PATHWAY</scope>
</reference>
<reference key="3">
    <citation type="journal article" date="2016" name="J. Am. Chem. Soc.">
        <title>P450-mediated coupling of indole fragments to forge communesin and unnatural isomers.</title>
        <authorList>
            <person name="Lin H.C."/>
            <person name="McMahon T.C."/>
            <person name="Patel A."/>
            <person name="Corsello M."/>
            <person name="Simon A."/>
            <person name="Xu W."/>
            <person name="Zhao M."/>
            <person name="Houk K.N."/>
            <person name="Garg N.K."/>
            <person name="Tang Y."/>
        </authorList>
    </citation>
    <scope>FUNCTION</scope>
</reference>
<accession>A0A0A2JW88</accession>
<keyword id="KW-0017">Alkaloid metabolism</keyword>
<keyword id="KW-0349">Heme</keyword>
<keyword id="KW-0376">Hydrogen peroxide</keyword>
<keyword id="KW-0408">Iron</keyword>
<keyword id="KW-0479">Metal-binding</keyword>
<keyword id="KW-0560">Oxidoreductase</keyword>
<keyword id="KW-0575">Peroxidase</keyword>
<keyword id="KW-1185">Reference proteome</keyword>